<evidence type="ECO:0000255" key="1">
    <source>
        <dbReference type="HAMAP-Rule" id="MF_03138"/>
    </source>
</evidence>
<sequence>MATDLSSSSTLLLSRNCKTPPFYHTTNSLSLSKTHHLYASRNAVVSRLRLLCQTTGSTQSTPTSGVSDLQFAAQVGQHRLSKVPISNIRNFCIIAHIDHGKSTLADKLLQVTGTVQQREMKEQFLDNMDLERERGITIKLQAARMRYVYENKPYCLNLIDTPGHVDFSYEVSRSLAACEGALLVVDASQGVEAQTLANVYLALENNLEIIPVLNKIDLPGSEPDRVIQEIEEVIGLDCSNAIRCSAKEGIGIIDILNAIVERIPSPRNTAEMPLRTLIFDSYYDPYRGVIVYFRVLDGSIKKGDRIYFMASKKDYFADEIGVLSPNQMQVEELYAGEVGYLSASIRSVADARVGDTITHYNRRAQSSLPGYKEATPMVFCGLFPVDADQFPEVRDALEKLQLNDAALKFEPETSSAMGFGFRCGFLGLLHMEIVQERLEREYNLSLITTAPSVVYRVNCVDGDTVECSNPSLLPEPGKRRSIEEPLVKIEMLTPKDYIGPLMELAQDRRGEFKEMRFITNSRASITYELPLAEMVGDFFDQLKSRSKGYASMEYTFIGYKESDLIKLEIQINGDPVEPLATIVHKDKAYPVGRALTQKLKELIPRQMFKVPIQACIGSKVIASEALPAIRKDVLAKCYGGDISRKKKLLKKQAEGKKRMKAIGKVDVPQEAFMAVLKLEKKPWSYKYKMSVNC</sequence>
<gene>
    <name type="ORF">RCOM_1767360</name>
</gene>
<organism>
    <name type="scientific">Ricinus communis</name>
    <name type="common">Castor bean</name>
    <dbReference type="NCBI Taxonomy" id="3988"/>
    <lineage>
        <taxon>Eukaryota</taxon>
        <taxon>Viridiplantae</taxon>
        <taxon>Streptophyta</taxon>
        <taxon>Embryophyta</taxon>
        <taxon>Tracheophyta</taxon>
        <taxon>Spermatophyta</taxon>
        <taxon>Magnoliopsida</taxon>
        <taxon>eudicotyledons</taxon>
        <taxon>Gunneridae</taxon>
        <taxon>Pentapetalae</taxon>
        <taxon>rosids</taxon>
        <taxon>fabids</taxon>
        <taxon>Malpighiales</taxon>
        <taxon>Euphorbiaceae</taxon>
        <taxon>Acalyphoideae</taxon>
        <taxon>Acalypheae</taxon>
        <taxon>Ricinus</taxon>
    </lineage>
</organism>
<proteinExistence type="inferred from homology"/>
<keyword id="KW-0150">Chloroplast</keyword>
<keyword id="KW-0342">GTP-binding</keyword>
<keyword id="KW-0378">Hydrolase</keyword>
<keyword id="KW-0547">Nucleotide-binding</keyword>
<keyword id="KW-0934">Plastid</keyword>
<keyword id="KW-0648">Protein biosynthesis</keyword>
<keyword id="KW-1185">Reference proteome</keyword>
<keyword id="KW-0809">Transit peptide</keyword>
<name>GUFP_RICCO</name>
<feature type="transit peptide" description="Chloroplast" evidence="1">
    <location>
        <begin position="1"/>
        <end position="51"/>
    </location>
</feature>
<feature type="chain" id="PRO_0000402920" description="Translation factor GUF1 homolog, chloroplastic">
    <location>
        <begin position="52"/>
        <end position="693"/>
    </location>
</feature>
<feature type="domain" description="tr-type G">
    <location>
        <begin position="86"/>
        <end position="267"/>
    </location>
</feature>
<feature type="binding site" evidence="1">
    <location>
        <begin position="95"/>
        <end position="102"/>
    </location>
    <ligand>
        <name>GTP</name>
        <dbReference type="ChEBI" id="CHEBI:37565"/>
    </ligand>
</feature>
<feature type="binding site" evidence="1">
    <location>
        <begin position="160"/>
        <end position="164"/>
    </location>
    <ligand>
        <name>GTP</name>
        <dbReference type="ChEBI" id="CHEBI:37565"/>
    </ligand>
</feature>
<feature type="binding site" evidence="1">
    <location>
        <begin position="214"/>
        <end position="217"/>
    </location>
    <ligand>
        <name>GTP</name>
        <dbReference type="ChEBI" id="CHEBI:37565"/>
    </ligand>
</feature>
<protein>
    <recommendedName>
        <fullName evidence="1">Translation factor GUF1 homolog, chloroplastic</fullName>
        <ecNumber>3.6.5.-</ecNumber>
    </recommendedName>
    <alternativeName>
        <fullName evidence="1">Elongation factor 4 homolog</fullName>
        <shortName evidence="1">EF-4</shortName>
    </alternativeName>
    <alternativeName>
        <fullName evidence="1">GTPase GUF1 homolog</fullName>
    </alternativeName>
    <alternativeName>
        <fullName evidence="1">Ribosomal back-translocase</fullName>
    </alternativeName>
</protein>
<comment type="function">
    <text evidence="1">Promotes chloroplast protein synthesis. May act as a fidelity factor of the translation reaction, by catalyzing a one-codon backward translocation of tRNAs on improperly translocated ribosomes.</text>
</comment>
<comment type="catalytic activity">
    <reaction evidence="1">
        <text>GTP + H2O = GDP + phosphate + H(+)</text>
        <dbReference type="Rhea" id="RHEA:19669"/>
        <dbReference type="ChEBI" id="CHEBI:15377"/>
        <dbReference type="ChEBI" id="CHEBI:15378"/>
        <dbReference type="ChEBI" id="CHEBI:37565"/>
        <dbReference type="ChEBI" id="CHEBI:43474"/>
        <dbReference type="ChEBI" id="CHEBI:58189"/>
    </reaction>
</comment>
<comment type="subcellular location">
    <subcellularLocation>
        <location evidence="1">Plastid</location>
        <location evidence="1">Chloroplast</location>
    </subcellularLocation>
</comment>
<comment type="similarity">
    <text evidence="1">Belongs to the TRAFAC class translation factor GTPase superfamily. Classic translation factor GTPase family. LepA subfamily.</text>
</comment>
<reference key="1">
    <citation type="journal article" date="2010" name="Nat. Biotechnol.">
        <title>Draft genome sequence of the oilseed species Ricinus communis.</title>
        <authorList>
            <person name="Chan A.P."/>
            <person name="Crabtree J."/>
            <person name="Zhao Q."/>
            <person name="Lorenzi H."/>
            <person name="Orvis J."/>
            <person name="Puiu D."/>
            <person name="Melake-Berhan A."/>
            <person name="Jones K.M."/>
            <person name="Redman J."/>
            <person name="Chen G."/>
            <person name="Cahoon E.B."/>
            <person name="Gedil M."/>
            <person name="Stanke M."/>
            <person name="Haas B.J."/>
            <person name="Wortman J.R."/>
            <person name="Fraser-Liggett C.M."/>
            <person name="Ravel J."/>
            <person name="Rabinowicz P.D."/>
        </authorList>
    </citation>
    <scope>NUCLEOTIDE SEQUENCE [LARGE SCALE GENOMIC DNA]</scope>
    <source>
        <strain>cv. Hale</strain>
    </source>
</reference>
<accession>B9RHQ5</accession>
<dbReference type="EC" id="3.6.5.-"/>
<dbReference type="EMBL" id="EQ973780">
    <property type="protein sequence ID" value="EEF49142.1"/>
    <property type="molecule type" value="Genomic_DNA"/>
</dbReference>
<dbReference type="SMR" id="B9RHQ5"/>
<dbReference type="FunCoup" id="B9RHQ5">
    <property type="interactions" value="750"/>
</dbReference>
<dbReference type="STRING" id="3988.B9RHQ5"/>
<dbReference type="eggNOG" id="KOG0462">
    <property type="taxonomic scope" value="Eukaryota"/>
</dbReference>
<dbReference type="InParanoid" id="B9RHQ5"/>
<dbReference type="Proteomes" id="UP000008311">
    <property type="component" value="Unassembled WGS sequence"/>
</dbReference>
<dbReference type="GO" id="GO:0009507">
    <property type="term" value="C:chloroplast"/>
    <property type="evidence" value="ECO:0007669"/>
    <property type="project" value="UniProtKB-SubCell"/>
</dbReference>
<dbReference type="GO" id="GO:0005525">
    <property type="term" value="F:GTP binding"/>
    <property type="evidence" value="ECO:0007669"/>
    <property type="project" value="UniProtKB-UniRule"/>
</dbReference>
<dbReference type="GO" id="GO:0003924">
    <property type="term" value="F:GTPase activity"/>
    <property type="evidence" value="ECO:0007669"/>
    <property type="project" value="UniProtKB-UniRule"/>
</dbReference>
<dbReference type="GO" id="GO:0043022">
    <property type="term" value="F:ribosome binding"/>
    <property type="evidence" value="ECO:0000318"/>
    <property type="project" value="GO_Central"/>
</dbReference>
<dbReference type="GO" id="GO:0045727">
    <property type="term" value="P:positive regulation of translation"/>
    <property type="evidence" value="ECO:0000318"/>
    <property type="project" value="GO_Central"/>
</dbReference>
<dbReference type="GO" id="GO:0006412">
    <property type="term" value="P:translation"/>
    <property type="evidence" value="ECO:0007669"/>
    <property type="project" value="UniProtKB-KW"/>
</dbReference>
<dbReference type="CDD" id="cd03699">
    <property type="entry name" value="EF4_II"/>
    <property type="match status" value="1"/>
</dbReference>
<dbReference type="CDD" id="cd16260">
    <property type="entry name" value="EF4_III"/>
    <property type="match status" value="1"/>
</dbReference>
<dbReference type="CDD" id="cd01890">
    <property type="entry name" value="LepA"/>
    <property type="match status" value="1"/>
</dbReference>
<dbReference type="CDD" id="cd03709">
    <property type="entry name" value="lepA_C"/>
    <property type="match status" value="1"/>
</dbReference>
<dbReference type="FunFam" id="3.40.50.300:FF:000078">
    <property type="entry name" value="Elongation factor 4"/>
    <property type="match status" value="1"/>
</dbReference>
<dbReference type="FunFam" id="2.40.30.10:FF:000015">
    <property type="entry name" value="Translation factor GUF1, mitochondrial"/>
    <property type="match status" value="1"/>
</dbReference>
<dbReference type="FunFam" id="3.30.70.240:FF:000007">
    <property type="entry name" value="Translation factor GUF1, mitochondrial"/>
    <property type="match status" value="1"/>
</dbReference>
<dbReference type="FunFam" id="3.30.70.2570:FF:000001">
    <property type="entry name" value="Translation factor GUF1, mitochondrial"/>
    <property type="match status" value="1"/>
</dbReference>
<dbReference type="FunFam" id="3.30.70.870:FF:000004">
    <property type="entry name" value="Translation factor GUF1, mitochondrial"/>
    <property type="match status" value="1"/>
</dbReference>
<dbReference type="Gene3D" id="3.30.70.240">
    <property type="match status" value="1"/>
</dbReference>
<dbReference type="Gene3D" id="3.30.70.2570">
    <property type="entry name" value="Elongation factor 4, C-terminal domain"/>
    <property type="match status" value="1"/>
</dbReference>
<dbReference type="Gene3D" id="3.30.70.870">
    <property type="entry name" value="Elongation Factor G (Translational Gtpase), domain 3"/>
    <property type="match status" value="1"/>
</dbReference>
<dbReference type="Gene3D" id="3.40.50.300">
    <property type="entry name" value="P-loop containing nucleotide triphosphate hydrolases"/>
    <property type="match status" value="1"/>
</dbReference>
<dbReference type="Gene3D" id="2.40.30.10">
    <property type="entry name" value="Translation factors"/>
    <property type="match status" value="1"/>
</dbReference>
<dbReference type="HAMAP" id="MF_03138">
    <property type="entry name" value="GUFP"/>
    <property type="match status" value="1"/>
</dbReference>
<dbReference type="HAMAP" id="MF_00071">
    <property type="entry name" value="LepA"/>
    <property type="match status" value="1"/>
</dbReference>
<dbReference type="InterPro" id="IPR006297">
    <property type="entry name" value="EF-4"/>
</dbReference>
<dbReference type="InterPro" id="IPR035647">
    <property type="entry name" value="EFG_III/V"/>
</dbReference>
<dbReference type="InterPro" id="IPR000640">
    <property type="entry name" value="EFG_V-like"/>
</dbReference>
<dbReference type="InterPro" id="IPR004161">
    <property type="entry name" value="EFTu-like_2"/>
</dbReference>
<dbReference type="InterPro" id="IPR031157">
    <property type="entry name" value="G_TR_CS"/>
</dbReference>
<dbReference type="InterPro" id="IPR027518">
    <property type="entry name" value="GUFP"/>
</dbReference>
<dbReference type="InterPro" id="IPR038363">
    <property type="entry name" value="LepA_C_sf"/>
</dbReference>
<dbReference type="InterPro" id="IPR013842">
    <property type="entry name" value="LepA_CTD"/>
</dbReference>
<dbReference type="InterPro" id="IPR035654">
    <property type="entry name" value="LepA_IV"/>
</dbReference>
<dbReference type="InterPro" id="IPR027417">
    <property type="entry name" value="P-loop_NTPase"/>
</dbReference>
<dbReference type="InterPro" id="IPR005225">
    <property type="entry name" value="Small_GTP-bd"/>
</dbReference>
<dbReference type="InterPro" id="IPR000795">
    <property type="entry name" value="T_Tr_GTP-bd_dom"/>
</dbReference>
<dbReference type="InterPro" id="IPR009000">
    <property type="entry name" value="Transl_B-barrel_sf"/>
</dbReference>
<dbReference type="NCBIfam" id="TIGR01393">
    <property type="entry name" value="lepA"/>
    <property type="match status" value="1"/>
</dbReference>
<dbReference type="NCBIfam" id="TIGR00231">
    <property type="entry name" value="small_GTP"/>
    <property type="match status" value="1"/>
</dbReference>
<dbReference type="PANTHER" id="PTHR43512:SF4">
    <property type="entry name" value="TRANSLATION FACTOR GUF1 HOMOLOG, CHLOROPLASTIC"/>
    <property type="match status" value="1"/>
</dbReference>
<dbReference type="PANTHER" id="PTHR43512">
    <property type="entry name" value="TRANSLATION FACTOR GUF1-RELATED"/>
    <property type="match status" value="1"/>
</dbReference>
<dbReference type="Pfam" id="PF00679">
    <property type="entry name" value="EFG_C"/>
    <property type="match status" value="1"/>
</dbReference>
<dbReference type="Pfam" id="PF00009">
    <property type="entry name" value="GTP_EFTU"/>
    <property type="match status" value="1"/>
</dbReference>
<dbReference type="Pfam" id="PF03144">
    <property type="entry name" value="GTP_EFTU_D2"/>
    <property type="match status" value="1"/>
</dbReference>
<dbReference type="Pfam" id="PF06421">
    <property type="entry name" value="LepA_C"/>
    <property type="match status" value="1"/>
</dbReference>
<dbReference type="PRINTS" id="PR00315">
    <property type="entry name" value="ELONGATNFCT"/>
</dbReference>
<dbReference type="SMART" id="SM00838">
    <property type="entry name" value="EFG_C"/>
    <property type="match status" value="1"/>
</dbReference>
<dbReference type="SUPFAM" id="SSF54980">
    <property type="entry name" value="EF-G C-terminal domain-like"/>
    <property type="match status" value="2"/>
</dbReference>
<dbReference type="SUPFAM" id="SSF52540">
    <property type="entry name" value="P-loop containing nucleoside triphosphate hydrolases"/>
    <property type="match status" value="1"/>
</dbReference>
<dbReference type="SUPFAM" id="SSF50447">
    <property type="entry name" value="Translation proteins"/>
    <property type="match status" value="1"/>
</dbReference>
<dbReference type="PROSITE" id="PS00301">
    <property type="entry name" value="G_TR_1"/>
    <property type="match status" value="1"/>
</dbReference>
<dbReference type="PROSITE" id="PS51722">
    <property type="entry name" value="G_TR_2"/>
    <property type="match status" value="1"/>
</dbReference>